<name>LEXA_SALTY</name>
<dbReference type="EC" id="3.4.21.88" evidence="1"/>
<dbReference type="EMBL" id="X63562">
    <property type="protein sequence ID" value="CAA45123.1"/>
    <property type="molecule type" value="Genomic_DNA"/>
</dbReference>
<dbReference type="EMBL" id="M83220">
    <property type="protein sequence ID" value="AAA27157.1"/>
    <property type="molecule type" value="Genomic_DNA"/>
</dbReference>
<dbReference type="EMBL" id="X63002">
    <property type="protein sequence ID" value="CAA44731.1"/>
    <property type="molecule type" value="Genomic_DNA"/>
</dbReference>
<dbReference type="EMBL" id="AE006468">
    <property type="protein sequence ID" value="AAL23061.1"/>
    <property type="molecule type" value="Genomic_DNA"/>
</dbReference>
<dbReference type="PIR" id="S35496">
    <property type="entry name" value="ILEBT"/>
</dbReference>
<dbReference type="RefSeq" id="NP_463102.1">
    <property type="nucleotide sequence ID" value="NC_003197.2"/>
</dbReference>
<dbReference type="RefSeq" id="WP_000646079.1">
    <property type="nucleotide sequence ID" value="NC_003197.2"/>
</dbReference>
<dbReference type="SMR" id="P0A273"/>
<dbReference type="STRING" id="99287.STM4237"/>
<dbReference type="MEROPS" id="S24.001"/>
<dbReference type="PaxDb" id="99287-STM4237"/>
<dbReference type="GeneID" id="1255763"/>
<dbReference type="KEGG" id="stm:STM4237"/>
<dbReference type="PATRIC" id="fig|99287.12.peg.4457"/>
<dbReference type="HOGENOM" id="CLU_066192_45_3_6"/>
<dbReference type="OMA" id="HVWLLPH"/>
<dbReference type="PhylomeDB" id="P0A273"/>
<dbReference type="BioCyc" id="SENT99287:STM4237-MONOMER"/>
<dbReference type="BRENDA" id="3.4.21.88">
    <property type="organism ID" value="5542"/>
</dbReference>
<dbReference type="Proteomes" id="UP000001014">
    <property type="component" value="Chromosome"/>
</dbReference>
<dbReference type="GO" id="GO:0032993">
    <property type="term" value="C:protein-DNA complex"/>
    <property type="evidence" value="ECO:0000318"/>
    <property type="project" value="GO_Central"/>
</dbReference>
<dbReference type="GO" id="GO:0001217">
    <property type="term" value="F:DNA-binding transcription repressor activity"/>
    <property type="evidence" value="ECO:0000318"/>
    <property type="project" value="GO_Central"/>
</dbReference>
<dbReference type="GO" id="GO:0043565">
    <property type="term" value="F:sequence-specific DNA binding"/>
    <property type="evidence" value="ECO:0000318"/>
    <property type="project" value="GO_Central"/>
</dbReference>
<dbReference type="GO" id="GO:0004252">
    <property type="term" value="F:serine-type endopeptidase activity"/>
    <property type="evidence" value="ECO:0007669"/>
    <property type="project" value="UniProtKB-UniRule"/>
</dbReference>
<dbReference type="GO" id="GO:0006281">
    <property type="term" value="P:DNA repair"/>
    <property type="evidence" value="ECO:0007669"/>
    <property type="project" value="UniProtKB-UniRule"/>
</dbReference>
<dbReference type="GO" id="GO:0006260">
    <property type="term" value="P:DNA replication"/>
    <property type="evidence" value="ECO:0007669"/>
    <property type="project" value="UniProtKB-UniRule"/>
</dbReference>
<dbReference type="GO" id="GO:0045892">
    <property type="term" value="P:negative regulation of DNA-templated transcription"/>
    <property type="evidence" value="ECO:0000318"/>
    <property type="project" value="GO_Central"/>
</dbReference>
<dbReference type="GO" id="GO:0006508">
    <property type="term" value="P:proteolysis"/>
    <property type="evidence" value="ECO:0007669"/>
    <property type="project" value="InterPro"/>
</dbReference>
<dbReference type="GO" id="GO:0009432">
    <property type="term" value="P:SOS response"/>
    <property type="evidence" value="ECO:0000318"/>
    <property type="project" value="GO_Central"/>
</dbReference>
<dbReference type="CDD" id="cd06529">
    <property type="entry name" value="S24_LexA-like"/>
    <property type="match status" value="1"/>
</dbReference>
<dbReference type="FunFam" id="1.10.10.10:FF:000009">
    <property type="entry name" value="LexA repressor"/>
    <property type="match status" value="1"/>
</dbReference>
<dbReference type="FunFam" id="2.10.109.10:FF:000001">
    <property type="entry name" value="LexA repressor"/>
    <property type="match status" value="1"/>
</dbReference>
<dbReference type="Gene3D" id="2.10.109.10">
    <property type="entry name" value="Umud Fragment, subunit A"/>
    <property type="match status" value="1"/>
</dbReference>
<dbReference type="Gene3D" id="1.10.10.10">
    <property type="entry name" value="Winged helix-like DNA-binding domain superfamily/Winged helix DNA-binding domain"/>
    <property type="match status" value="1"/>
</dbReference>
<dbReference type="HAMAP" id="MF_00015">
    <property type="entry name" value="LexA"/>
    <property type="match status" value="1"/>
</dbReference>
<dbReference type="InterPro" id="IPR006200">
    <property type="entry name" value="LexA"/>
</dbReference>
<dbReference type="InterPro" id="IPR039418">
    <property type="entry name" value="LexA-like"/>
</dbReference>
<dbReference type="InterPro" id="IPR036286">
    <property type="entry name" value="LexA/Signal_pep-like_sf"/>
</dbReference>
<dbReference type="InterPro" id="IPR006199">
    <property type="entry name" value="LexA_DNA-bd_dom"/>
</dbReference>
<dbReference type="InterPro" id="IPR050077">
    <property type="entry name" value="LexA_repressor"/>
</dbReference>
<dbReference type="InterPro" id="IPR006197">
    <property type="entry name" value="Peptidase_S24_LexA"/>
</dbReference>
<dbReference type="InterPro" id="IPR015927">
    <property type="entry name" value="Peptidase_S24_S26A/B/C"/>
</dbReference>
<dbReference type="InterPro" id="IPR036388">
    <property type="entry name" value="WH-like_DNA-bd_sf"/>
</dbReference>
<dbReference type="InterPro" id="IPR036390">
    <property type="entry name" value="WH_DNA-bd_sf"/>
</dbReference>
<dbReference type="NCBIfam" id="TIGR00498">
    <property type="entry name" value="lexA"/>
    <property type="match status" value="1"/>
</dbReference>
<dbReference type="PANTHER" id="PTHR33516">
    <property type="entry name" value="LEXA REPRESSOR"/>
    <property type="match status" value="1"/>
</dbReference>
<dbReference type="PANTHER" id="PTHR33516:SF2">
    <property type="entry name" value="LEXA REPRESSOR-RELATED"/>
    <property type="match status" value="1"/>
</dbReference>
<dbReference type="Pfam" id="PF01726">
    <property type="entry name" value="LexA_DNA_bind"/>
    <property type="match status" value="1"/>
</dbReference>
<dbReference type="Pfam" id="PF00717">
    <property type="entry name" value="Peptidase_S24"/>
    <property type="match status" value="1"/>
</dbReference>
<dbReference type="PRINTS" id="PR00726">
    <property type="entry name" value="LEXASERPTASE"/>
</dbReference>
<dbReference type="SUPFAM" id="SSF51306">
    <property type="entry name" value="LexA/Signal peptidase"/>
    <property type="match status" value="1"/>
</dbReference>
<dbReference type="SUPFAM" id="SSF46785">
    <property type="entry name" value="Winged helix' DNA-binding domain"/>
    <property type="match status" value="1"/>
</dbReference>
<protein>
    <recommendedName>
        <fullName evidence="1">LexA repressor</fullName>
        <ecNumber evidence="1">3.4.21.88</ecNumber>
    </recommendedName>
</protein>
<evidence type="ECO:0000255" key="1">
    <source>
        <dbReference type="HAMAP-Rule" id="MF_00015"/>
    </source>
</evidence>
<evidence type="ECO:0000305" key="2"/>
<accession>P0A273</accession>
<accession>P29831</accession>
<organism>
    <name type="scientific">Salmonella typhimurium (strain LT2 / SGSC1412 / ATCC 700720)</name>
    <dbReference type="NCBI Taxonomy" id="99287"/>
    <lineage>
        <taxon>Bacteria</taxon>
        <taxon>Pseudomonadati</taxon>
        <taxon>Pseudomonadota</taxon>
        <taxon>Gammaproteobacteria</taxon>
        <taxon>Enterobacterales</taxon>
        <taxon>Enterobacteriaceae</taxon>
        <taxon>Salmonella</taxon>
    </lineage>
</organism>
<keyword id="KW-0068">Autocatalytic cleavage</keyword>
<keyword id="KW-0227">DNA damage</keyword>
<keyword id="KW-0234">DNA repair</keyword>
<keyword id="KW-0235">DNA replication</keyword>
<keyword id="KW-0238">DNA-binding</keyword>
<keyword id="KW-0378">Hydrolase</keyword>
<keyword id="KW-1185">Reference proteome</keyword>
<keyword id="KW-0678">Repressor</keyword>
<keyword id="KW-0742">SOS response</keyword>
<keyword id="KW-0804">Transcription</keyword>
<keyword id="KW-0805">Transcription regulation</keyword>
<reference key="1">
    <citation type="journal article" date="1992" name="Nucleic Acids Res.">
        <title>Sequence of the Salmonella typhimurium LT2 lexA gene and its regulatory region.</title>
        <authorList>
            <person name="Mustard J.A."/>
            <person name="Thliveris A.T."/>
            <person name="Mount D.W."/>
        </authorList>
    </citation>
    <scope>NUCLEOTIDE SEQUENCE [GENOMIC DNA]</scope>
    <source>
        <strain>LT2</strain>
    </source>
</reference>
<reference key="2">
    <citation type="journal article" date="1992" name="Mol. Gen. Genet.">
        <title>Nucleotide sequence analysis and comparison of the lexA genes from Salmonella typhimurium, Erwinia carotovora, Pseudomonas aeruginosa and Pseudomonas putida.</title>
        <authorList>
            <person name="Garriga X."/>
            <person name="Calero S."/>
            <person name="Barbe J."/>
        </authorList>
    </citation>
    <scope>NUCLEOTIDE SEQUENCE [GENOMIC DNA]</scope>
    <source>
        <strain>LT2</strain>
    </source>
</reference>
<reference key="3">
    <citation type="journal article" date="2001" name="Nature">
        <title>Complete genome sequence of Salmonella enterica serovar Typhimurium LT2.</title>
        <authorList>
            <person name="McClelland M."/>
            <person name="Sanderson K.E."/>
            <person name="Spieth J."/>
            <person name="Clifton S.W."/>
            <person name="Latreille P."/>
            <person name="Courtney L."/>
            <person name="Porwollik S."/>
            <person name="Ali J."/>
            <person name="Dante M."/>
            <person name="Du F."/>
            <person name="Hou S."/>
            <person name="Layman D."/>
            <person name="Leonard S."/>
            <person name="Nguyen C."/>
            <person name="Scott K."/>
            <person name="Holmes A."/>
            <person name="Grewal N."/>
            <person name="Mulvaney E."/>
            <person name="Ryan E."/>
            <person name="Sun H."/>
            <person name="Florea L."/>
            <person name="Miller W."/>
            <person name="Stoneking T."/>
            <person name="Nhan M."/>
            <person name="Waterston R."/>
            <person name="Wilson R.K."/>
        </authorList>
    </citation>
    <scope>NUCLEOTIDE SEQUENCE [LARGE SCALE GENOMIC DNA]</scope>
    <source>
        <strain>LT2 / SGSC1412 / ATCC 700720</strain>
    </source>
</reference>
<sequence>MKALTARQQEVFDLIRDHISQTGMPPTRAEIAQRLGFRSPNAAEEHLKALARKGVLEIVSGASRGIRLLQEEEDGLPLVGRVAAGEPLLAQQHIEGHYQVDPSLFKPSADFLLRVSGMSMKDIGIMDGDLLAVHKTQDVRNGQVVVARIDDEVTVKRLKKQGNKVELLPENSEFTPIVVDLREQSFTIEGLAVGVIRNGEWL</sequence>
<proteinExistence type="inferred from homology"/>
<gene>
    <name evidence="1" type="primary">lexA</name>
    <name type="ordered locus">STM4237</name>
</gene>
<comment type="function">
    <text evidence="1">Represses a number of genes involved in the response to DNA damage (SOS response), including recA and lexA. Binds to the 16 bp palindromic sequence 5'-CTGTATATATATACAG-3'. In the presence of single-stranded DNA, RecA interacts with LexA causing an autocatalytic cleavage which disrupts the DNA-binding part of LexA, leading to derepression of the SOS regulon and eventually DNA repair.</text>
</comment>
<comment type="catalytic activity">
    <reaction evidence="1">
        <text>Hydrolysis of Ala-|-Gly bond in repressor LexA.</text>
        <dbReference type="EC" id="3.4.21.88"/>
    </reaction>
</comment>
<comment type="subunit">
    <text evidence="1">Homodimer.</text>
</comment>
<comment type="similarity">
    <text evidence="1">Belongs to the peptidase S24 family.</text>
</comment>
<feature type="chain" id="PRO_0000170083" description="LexA repressor">
    <location>
        <begin position="1"/>
        <end position="202"/>
    </location>
</feature>
<feature type="DNA-binding region" description="H-T-H motif" evidence="1">
    <location>
        <begin position="28"/>
        <end position="48"/>
    </location>
</feature>
<feature type="active site" description="For autocatalytic cleavage activity" evidence="1">
    <location>
        <position position="119"/>
    </location>
</feature>
<feature type="active site" description="For autocatalytic cleavage activity" evidence="1">
    <location>
        <position position="156"/>
    </location>
</feature>
<feature type="site" description="Cleavage; by autolysis">
    <location>
        <begin position="84"/>
        <end position="85"/>
    </location>
</feature>
<feature type="sequence conflict" description="In Ref. 1; CAA45123/AAA27157." evidence="2" ref="1">
    <original>TQ</original>
    <variation>SE</variation>
    <location>
        <begin position="136"/>
        <end position="137"/>
    </location>
</feature>